<gene>
    <name evidence="1" type="primary">hslV</name>
    <name type="ordered locus">BCQ_3615</name>
</gene>
<evidence type="ECO:0000255" key="1">
    <source>
        <dbReference type="HAMAP-Rule" id="MF_00248"/>
    </source>
</evidence>
<protein>
    <recommendedName>
        <fullName evidence="1">ATP-dependent protease subunit HslV</fullName>
        <ecNumber evidence="1">3.4.25.2</ecNumber>
    </recommendedName>
</protein>
<accession>B9IVB9</accession>
<comment type="function">
    <text evidence="1">Protease subunit of a proteasome-like degradation complex believed to be a general protein degrading machinery.</text>
</comment>
<comment type="catalytic activity">
    <reaction evidence="1">
        <text>ATP-dependent cleavage of peptide bonds with broad specificity.</text>
        <dbReference type="EC" id="3.4.25.2"/>
    </reaction>
</comment>
<comment type="activity regulation">
    <text evidence="1">Allosterically activated by HslU binding.</text>
</comment>
<comment type="subunit">
    <text evidence="1">A double ring-shaped homohexamer of HslV is capped on each side by a ring-shaped HslU homohexamer. The assembly of the HslU/HslV complex is dependent on binding of ATP.</text>
</comment>
<comment type="subcellular location">
    <subcellularLocation>
        <location evidence="1">Cytoplasm</location>
    </subcellularLocation>
</comment>
<comment type="similarity">
    <text evidence="1">Belongs to the peptidase T1B family. HslV subfamily.</text>
</comment>
<proteinExistence type="inferred from homology"/>
<dbReference type="EC" id="3.4.25.2" evidence="1"/>
<dbReference type="EMBL" id="CP000227">
    <property type="protein sequence ID" value="ACM14043.1"/>
    <property type="molecule type" value="Genomic_DNA"/>
</dbReference>
<dbReference type="SMR" id="B9IVB9"/>
<dbReference type="MEROPS" id="T01.007"/>
<dbReference type="KEGG" id="bcq:BCQ_3615"/>
<dbReference type="HOGENOM" id="CLU_093872_1_0_9"/>
<dbReference type="Proteomes" id="UP000000441">
    <property type="component" value="Chromosome"/>
</dbReference>
<dbReference type="GO" id="GO:0009376">
    <property type="term" value="C:HslUV protease complex"/>
    <property type="evidence" value="ECO:0007669"/>
    <property type="project" value="UniProtKB-UniRule"/>
</dbReference>
<dbReference type="GO" id="GO:0005839">
    <property type="term" value="C:proteasome core complex"/>
    <property type="evidence" value="ECO:0007669"/>
    <property type="project" value="InterPro"/>
</dbReference>
<dbReference type="GO" id="GO:0046872">
    <property type="term" value="F:metal ion binding"/>
    <property type="evidence" value="ECO:0007669"/>
    <property type="project" value="UniProtKB-KW"/>
</dbReference>
<dbReference type="GO" id="GO:0004298">
    <property type="term" value="F:threonine-type endopeptidase activity"/>
    <property type="evidence" value="ECO:0007669"/>
    <property type="project" value="UniProtKB-KW"/>
</dbReference>
<dbReference type="GO" id="GO:0051603">
    <property type="term" value="P:proteolysis involved in protein catabolic process"/>
    <property type="evidence" value="ECO:0007669"/>
    <property type="project" value="InterPro"/>
</dbReference>
<dbReference type="CDD" id="cd01913">
    <property type="entry name" value="protease_HslV"/>
    <property type="match status" value="1"/>
</dbReference>
<dbReference type="Gene3D" id="3.60.20.10">
    <property type="entry name" value="Glutamine Phosphoribosylpyrophosphate, subunit 1, domain 1"/>
    <property type="match status" value="1"/>
</dbReference>
<dbReference type="HAMAP" id="MF_00248">
    <property type="entry name" value="HslV"/>
    <property type="match status" value="1"/>
</dbReference>
<dbReference type="InterPro" id="IPR022281">
    <property type="entry name" value="ATP-dep_Prtase_HsIV_su"/>
</dbReference>
<dbReference type="InterPro" id="IPR029055">
    <property type="entry name" value="Ntn_hydrolases_N"/>
</dbReference>
<dbReference type="InterPro" id="IPR001353">
    <property type="entry name" value="Proteasome_sua/b"/>
</dbReference>
<dbReference type="InterPro" id="IPR023333">
    <property type="entry name" value="Proteasome_suB-type"/>
</dbReference>
<dbReference type="NCBIfam" id="TIGR03692">
    <property type="entry name" value="ATP_dep_HslV"/>
    <property type="match status" value="1"/>
</dbReference>
<dbReference type="NCBIfam" id="NF003964">
    <property type="entry name" value="PRK05456.1"/>
    <property type="match status" value="1"/>
</dbReference>
<dbReference type="PANTHER" id="PTHR32194:SF0">
    <property type="entry name" value="ATP-DEPENDENT PROTEASE SUBUNIT HSLV"/>
    <property type="match status" value="1"/>
</dbReference>
<dbReference type="PANTHER" id="PTHR32194">
    <property type="entry name" value="METALLOPROTEASE TLDD"/>
    <property type="match status" value="1"/>
</dbReference>
<dbReference type="Pfam" id="PF00227">
    <property type="entry name" value="Proteasome"/>
    <property type="match status" value="1"/>
</dbReference>
<dbReference type="PIRSF" id="PIRSF039093">
    <property type="entry name" value="HslV"/>
    <property type="match status" value="1"/>
</dbReference>
<dbReference type="SUPFAM" id="SSF56235">
    <property type="entry name" value="N-terminal nucleophile aminohydrolases (Ntn hydrolases)"/>
    <property type="match status" value="1"/>
</dbReference>
<dbReference type="PROSITE" id="PS51476">
    <property type="entry name" value="PROTEASOME_BETA_2"/>
    <property type="match status" value="1"/>
</dbReference>
<name>HSLV_BACCQ</name>
<reference key="1">
    <citation type="journal article" date="2009" name="J. Bacteriol.">
        <title>Complete genome sequence of the extremophilic Bacillus cereus strain Q1 with industrial applications.</title>
        <authorList>
            <person name="Xiong Z."/>
            <person name="Jiang Y."/>
            <person name="Qi D."/>
            <person name="Lu H."/>
            <person name="Yang F."/>
            <person name="Yang J."/>
            <person name="Chen L."/>
            <person name="Sun L."/>
            <person name="Xu X."/>
            <person name="Xue Y."/>
            <person name="Zhu Y."/>
            <person name="Jin Q."/>
        </authorList>
    </citation>
    <scope>NUCLEOTIDE SEQUENCE [LARGE SCALE GENOMIC DNA]</scope>
    <source>
        <strain>Q1</strain>
    </source>
</reference>
<feature type="chain" id="PRO_1000192674" description="ATP-dependent protease subunit HslV">
    <location>
        <begin position="1"/>
        <end position="180"/>
    </location>
</feature>
<feature type="active site" evidence="1">
    <location>
        <position position="7"/>
    </location>
</feature>
<feature type="binding site" evidence="1">
    <location>
        <position position="165"/>
    </location>
    <ligand>
        <name>Na(+)</name>
        <dbReference type="ChEBI" id="CHEBI:29101"/>
    </ligand>
</feature>
<feature type="binding site" evidence="1">
    <location>
        <position position="168"/>
    </location>
    <ligand>
        <name>Na(+)</name>
        <dbReference type="ChEBI" id="CHEBI:29101"/>
    </ligand>
</feature>
<feature type="binding site" evidence="1">
    <location>
        <position position="171"/>
    </location>
    <ligand>
        <name>Na(+)</name>
        <dbReference type="ChEBI" id="CHEBI:29101"/>
    </ligand>
</feature>
<keyword id="KW-0021">Allosteric enzyme</keyword>
<keyword id="KW-0963">Cytoplasm</keyword>
<keyword id="KW-0378">Hydrolase</keyword>
<keyword id="KW-0479">Metal-binding</keyword>
<keyword id="KW-0645">Protease</keyword>
<keyword id="KW-0915">Sodium</keyword>
<keyword id="KW-0888">Threonine protease</keyword>
<sequence>MGNFHATTIFAVHHNGECAMAGDGQVTMGNAVVMKHTARKVRKLFQGKVLAGFAGSVADAFTLFEMFEGKLEEYNGNLQRAAVEMAKQWRGDKMLRQLEAMLIVMDKTTMLLVSGTGEVIEPDDGILAIGSGGNYALSAGRALKQYASEHLTAKQIAKASLNIAGDICVYTNHNIIVEEL</sequence>
<organism>
    <name type="scientific">Bacillus cereus (strain Q1)</name>
    <dbReference type="NCBI Taxonomy" id="361100"/>
    <lineage>
        <taxon>Bacteria</taxon>
        <taxon>Bacillati</taxon>
        <taxon>Bacillota</taxon>
        <taxon>Bacilli</taxon>
        <taxon>Bacillales</taxon>
        <taxon>Bacillaceae</taxon>
        <taxon>Bacillus</taxon>
        <taxon>Bacillus cereus group</taxon>
    </lineage>
</organism>